<feature type="chain" id="PRO_0000128025" description="Uncharacterized protein AF_1569">
    <location>
        <begin position="1"/>
        <end position="259"/>
    </location>
</feature>
<feature type="transmembrane region" description="Helical" evidence="1">
    <location>
        <begin position="9"/>
        <end position="31"/>
    </location>
</feature>
<feature type="transmembrane region" description="Helical" evidence="1">
    <location>
        <begin position="84"/>
        <end position="106"/>
    </location>
</feature>
<feature type="transmembrane region" description="Helical" evidence="1">
    <location>
        <begin position="126"/>
        <end position="148"/>
    </location>
</feature>
<feature type="transmembrane region" description="Helical" evidence="1">
    <location>
        <begin position="153"/>
        <end position="175"/>
    </location>
</feature>
<feature type="transmembrane region" description="Helical" evidence="1">
    <location>
        <begin position="196"/>
        <end position="215"/>
    </location>
</feature>
<feature type="transmembrane region" description="Helical" evidence="1">
    <location>
        <begin position="230"/>
        <end position="252"/>
    </location>
</feature>
<reference key="1">
    <citation type="journal article" date="1997" name="Nature">
        <title>The complete genome sequence of the hyperthermophilic, sulphate-reducing archaeon Archaeoglobus fulgidus.</title>
        <authorList>
            <person name="Klenk H.-P."/>
            <person name="Clayton R.A."/>
            <person name="Tomb J.-F."/>
            <person name="White O."/>
            <person name="Nelson K.E."/>
            <person name="Ketchum K.A."/>
            <person name="Dodson R.J."/>
            <person name="Gwinn M.L."/>
            <person name="Hickey E.K."/>
            <person name="Peterson J.D."/>
            <person name="Richardson D.L."/>
            <person name="Kerlavage A.R."/>
            <person name="Graham D.E."/>
            <person name="Kyrpides N.C."/>
            <person name="Fleischmann R.D."/>
            <person name="Quackenbush J."/>
            <person name="Lee N.H."/>
            <person name="Sutton G.G."/>
            <person name="Gill S.R."/>
            <person name="Kirkness E.F."/>
            <person name="Dougherty B.A."/>
            <person name="McKenney K."/>
            <person name="Adams M.D."/>
            <person name="Loftus B.J."/>
            <person name="Peterson S.N."/>
            <person name="Reich C.I."/>
            <person name="McNeil L.K."/>
            <person name="Badger J.H."/>
            <person name="Glodek A."/>
            <person name="Zhou L."/>
            <person name="Overbeek R."/>
            <person name="Gocayne J.D."/>
            <person name="Weidman J.F."/>
            <person name="McDonald L.A."/>
            <person name="Utterback T.R."/>
            <person name="Cotton M.D."/>
            <person name="Spriggs T."/>
            <person name="Artiach P."/>
            <person name="Kaine B.P."/>
            <person name="Sykes S.M."/>
            <person name="Sadow P.W."/>
            <person name="D'Andrea K.P."/>
            <person name="Bowman C."/>
            <person name="Fujii C."/>
            <person name="Garland S.A."/>
            <person name="Mason T.M."/>
            <person name="Olsen G.J."/>
            <person name="Fraser C.M."/>
            <person name="Smith H.O."/>
            <person name="Woese C.R."/>
            <person name="Venter J.C."/>
        </authorList>
    </citation>
    <scope>NUCLEOTIDE SEQUENCE [LARGE SCALE GENOMIC DNA]</scope>
    <source>
        <strain>ATCC 49558 / DSM 4304 / JCM 9628 / NBRC 100126 / VC-16</strain>
    </source>
</reference>
<dbReference type="EMBL" id="AE000782">
    <property type="protein sequence ID" value="AAB89673.1"/>
    <property type="molecule type" value="Genomic_DNA"/>
</dbReference>
<dbReference type="PIR" id="H69445">
    <property type="entry name" value="H69445"/>
</dbReference>
<dbReference type="SMR" id="O28703"/>
<dbReference type="STRING" id="224325.AF_1569"/>
<dbReference type="PaxDb" id="224325-AF_1569"/>
<dbReference type="EnsemblBacteria" id="AAB89673">
    <property type="protein sequence ID" value="AAB89673"/>
    <property type="gene ID" value="AF_1569"/>
</dbReference>
<dbReference type="KEGG" id="afu:AF_1569"/>
<dbReference type="HOGENOM" id="CLU_1071994_0_0_2"/>
<dbReference type="Proteomes" id="UP000002199">
    <property type="component" value="Chromosome"/>
</dbReference>
<dbReference type="GO" id="GO:0005886">
    <property type="term" value="C:plasma membrane"/>
    <property type="evidence" value="ECO:0007669"/>
    <property type="project" value="UniProtKB-SubCell"/>
</dbReference>
<evidence type="ECO:0000255" key="1"/>
<evidence type="ECO:0000305" key="2"/>
<organism>
    <name type="scientific">Archaeoglobus fulgidus (strain ATCC 49558 / DSM 4304 / JCM 9628 / NBRC 100126 / VC-16)</name>
    <dbReference type="NCBI Taxonomy" id="224325"/>
    <lineage>
        <taxon>Archaea</taxon>
        <taxon>Methanobacteriati</taxon>
        <taxon>Methanobacteriota</taxon>
        <taxon>Archaeoglobi</taxon>
        <taxon>Archaeoglobales</taxon>
        <taxon>Archaeoglobaceae</taxon>
        <taxon>Archaeoglobus</taxon>
    </lineage>
</organism>
<sequence length="259" mass="29508">MLRKKLLKILSVLTLFIFFQYVAKFGILESLALSIVYVLLMEILRDLEILAEKRVTYKLSSTEVTKYVVSEASIFVTSLAITFLLGGEILDGLAFGFFFLVYLQWFYNEAEMERVFNDFPTFPKIFLIYRFAITLFGSTICFYRFVFGDVLKSIVAGILTFALFLSQRALNLEYVTSGKFVRSVSNPQWYFRRVKHFILSAPAMGVGATAGYIAARSAEIESIIETVCWTFRAFLLLTIVVVCILTLGSWLGLKVHKKA</sequence>
<accession>O28703</accession>
<proteinExistence type="predicted"/>
<keyword id="KW-1003">Cell membrane</keyword>
<keyword id="KW-0472">Membrane</keyword>
<keyword id="KW-1185">Reference proteome</keyword>
<keyword id="KW-0812">Transmembrane</keyword>
<keyword id="KW-1133">Transmembrane helix</keyword>
<comment type="subcellular location">
    <subcellularLocation>
        <location evidence="2">Cell membrane</location>
        <topology evidence="2">Multi-pass membrane protein</topology>
    </subcellularLocation>
</comment>
<name>Y1569_ARCFU</name>
<protein>
    <recommendedName>
        <fullName>Uncharacterized protein AF_1569</fullName>
    </recommendedName>
</protein>
<gene>
    <name type="ordered locus">AF_1569</name>
</gene>